<name>PHNC_MYCCT</name>
<comment type="function">
    <text evidence="1">Part of the ABC transporter complex PhnCDE involved in phosphonates import. Responsible for energy coupling to the transport system.</text>
</comment>
<comment type="catalytic activity">
    <reaction evidence="1">
        <text>phosphonate(out) + ATP + H2O = phosphonate(in) + ADP + phosphate + H(+)</text>
        <dbReference type="Rhea" id="RHEA:18065"/>
        <dbReference type="ChEBI" id="CHEBI:15377"/>
        <dbReference type="ChEBI" id="CHEBI:15378"/>
        <dbReference type="ChEBI" id="CHEBI:16215"/>
        <dbReference type="ChEBI" id="CHEBI:30616"/>
        <dbReference type="ChEBI" id="CHEBI:43474"/>
        <dbReference type="ChEBI" id="CHEBI:456216"/>
        <dbReference type="EC" id="7.3.2.2"/>
    </reaction>
</comment>
<comment type="subunit">
    <text evidence="1">The complex is composed of two ATP-binding proteins (PhnC), two transmembrane proteins (PhnE) and a solute-binding protein (PhnD).</text>
</comment>
<comment type="subcellular location">
    <subcellularLocation>
        <location evidence="1">Cell membrane</location>
        <topology evidence="1">Peripheral membrane protein</topology>
    </subcellularLocation>
</comment>
<comment type="similarity">
    <text evidence="1">Belongs to the ABC transporter superfamily. Phosphonates importer (TC 3.A.1.9.1) family.</text>
</comment>
<feature type="chain" id="PRO_0000274722" description="Phosphonates import ATP-binding protein PhnC">
    <location>
        <begin position="1"/>
        <end position="250"/>
    </location>
</feature>
<feature type="domain" description="ABC transporter" evidence="1">
    <location>
        <begin position="2"/>
        <end position="247"/>
    </location>
</feature>
<feature type="binding site" evidence="1">
    <location>
        <begin position="35"/>
        <end position="42"/>
    </location>
    <ligand>
        <name>ATP</name>
        <dbReference type="ChEBI" id="CHEBI:30616"/>
    </ligand>
</feature>
<keyword id="KW-0067">ATP-binding</keyword>
<keyword id="KW-1003">Cell membrane</keyword>
<keyword id="KW-0472">Membrane</keyword>
<keyword id="KW-0547">Nucleotide-binding</keyword>
<keyword id="KW-0918">Phosphonate transport</keyword>
<keyword id="KW-1278">Translocase</keyword>
<keyword id="KW-0813">Transport</keyword>
<protein>
    <recommendedName>
        <fullName evidence="1">Phosphonates import ATP-binding protein PhnC</fullName>
        <ecNumber evidence="1">7.3.2.2</ecNumber>
    </recommendedName>
</protein>
<evidence type="ECO:0000255" key="1">
    <source>
        <dbReference type="HAMAP-Rule" id="MF_01713"/>
    </source>
</evidence>
<organism>
    <name type="scientific">Mycoplasma capricolum subsp. capricolum (strain California kid / ATCC 27343 / NCTC 10154)</name>
    <dbReference type="NCBI Taxonomy" id="340047"/>
    <lineage>
        <taxon>Bacteria</taxon>
        <taxon>Bacillati</taxon>
        <taxon>Mycoplasmatota</taxon>
        <taxon>Mollicutes</taxon>
        <taxon>Mycoplasmataceae</taxon>
        <taxon>Mycoplasma</taxon>
    </lineage>
</organism>
<gene>
    <name evidence="1" type="primary">phnC</name>
    <name type="ordered locus">MCAP_0826</name>
</gene>
<reference key="1">
    <citation type="submission" date="2005-09" db="EMBL/GenBank/DDBJ databases">
        <authorList>
            <person name="Glass J.I."/>
            <person name="Lartigue C."/>
            <person name="Pfannkoch C."/>
            <person name="Baden-Tillson H."/>
            <person name="Smith H.O."/>
            <person name="Venter J.C."/>
            <person name="Roske K."/>
            <person name="Wise K.S."/>
            <person name="Calcutt M.J."/>
            <person name="Nelson W.C."/>
            <person name="Nierman W.C."/>
        </authorList>
    </citation>
    <scope>NUCLEOTIDE SEQUENCE [LARGE SCALE GENOMIC DNA]</scope>
    <source>
        <strain>California kid / ATCC 27343 / NCTC 10154</strain>
    </source>
</reference>
<dbReference type="EC" id="7.3.2.2" evidence="1"/>
<dbReference type="EMBL" id="CP000123">
    <property type="protein sequence ID" value="ABC01208.1"/>
    <property type="molecule type" value="Genomic_DNA"/>
</dbReference>
<dbReference type="RefSeq" id="WP_011387657.1">
    <property type="nucleotide sequence ID" value="NC_007633.1"/>
</dbReference>
<dbReference type="SMR" id="Q2SR40"/>
<dbReference type="GeneID" id="23778222"/>
<dbReference type="KEGG" id="mcp:MCAP_0826"/>
<dbReference type="HOGENOM" id="CLU_000604_1_22_14"/>
<dbReference type="PhylomeDB" id="Q2SR40"/>
<dbReference type="Proteomes" id="UP000001928">
    <property type="component" value="Chromosome"/>
</dbReference>
<dbReference type="GO" id="GO:0005886">
    <property type="term" value="C:plasma membrane"/>
    <property type="evidence" value="ECO:0007669"/>
    <property type="project" value="UniProtKB-SubCell"/>
</dbReference>
<dbReference type="GO" id="GO:0015416">
    <property type="term" value="F:ABC-type phosphonate transporter activity"/>
    <property type="evidence" value="ECO:0007669"/>
    <property type="project" value="UniProtKB-EC"/>
</dbReference>
<dbReference type="GO" id="GO:0005524">
    <property type="term" value="F:ATP binding"/>
    <property type="evidence" value="ECO:0007669"/>
    <property type="project" value="UniProtKB-KW"/>
</dbReference>
<dbReference type="GO" id="GO:0016887">
    <property type="term" value="F:ATP hydrolysis activity"/>
    <property type="evidence" value="ECO:0007669"/>
    <property type="project" value="InterPro"/>
</dbReference>
<dbReference type="CDD" id="cd03256">
    <property type="entry name" value="ABC_PhnC_transporter"/>
    <property type="match status" value="1"/>
</dbReference>
<dbReference type="Gene3D" id="3.40.50.300">
    <property type="entry name" value="P-loop containing nucleotide triphosphate hydrolases"/>
    <property type="match status" value="1"/>
</dbReference>
<dbReference type="InterPro" id="IPR003593">
    <property type="entry name" value="AAA+_ATPase"/>
</dbReference>
<dbReference type="InterPro" id="IPR003439">
    <property type="entry name" value="ABC_transporter-like_ATP-bd"/>
</dbReference>
<dbReference type="InterPro" id="IPR017871">
    <property type="entry name" value="ABC_transporter-like_CS"/>
</dbReference>
<dbReference type="InterPro" id="IPR012693">
    <property type="entry name" value="ABC_transpr_PhnC"/>
</dbReference>
<dbReference type="InterPro" id="IPR050086">
    <property type="entry name" value="MetN_ABC_transporter-like"/>
</dbReference>
<dbReference type="InterPro" id="IPR027417">
    <property type="entry name" value="P-loop_NTPase"/>
</dbReference>
<dbReference type="NCBIfam" id="TIGR02315">
    <property type="entry name" value="ABC_phnC"/>
    <property type="match status" value="1"/>
</dbReference>
<dbReference type="PANTHER" id="PTHR43166">
    <property type="entry name" value="AMINO ACID IMPORT ATP-BINDING PROTEIN"/>
    <property type="match status" value="1"/>
</dbReference>
<dbReference type="PANTHER" id="PTHR43166:SF6">
    <property type="entry name" value="PHOSPHONATES IMPORT ATP-BINDING PROTEIN PHNC"/>
    <property type="match status" value="1"/>
</dbReference>
<dbReference type="Pfam" id="PF00005">
    <property type="entry name" value="ABC_tran"/>
    <property type="match status" value="1"/>
</dbReference>
<dbReference type="SMART" id="SM00382">
    <property type="entry name" value="AAA"/>
    <property type="match status" value="1"/>
</dbReference>
<dbReference type="SUPFAM" id="SSF52540">
    <property type="entry name" value="P-loop containing nucleoside triphosphate hydrolases"/>
    <property type="match status" value="1"/>
</dbReference>
<dbReference type="PROSITE" id="PS00211">
    <property type="entry name" value="ABC_TRANSPORTER_1"/>
    <property type="match status" value="1"/>
</dbReference>
<dbReference type="PROSITE" id="PS50893">
    <property type="entry name" value="ABC_TRANSPORTER_2"/>
    <property type="match status" value="1"/>
</dbReference>
<dbReference type="PROSITE" id="PS51249">
    <property type="entry name" value="PHNC"/>
    <property type="match status" value="1"/>
</dbReference>
<proteinExistence type="inferred from homology"/>
<accession>Q2SR40</accession>
<sequence length="250" mass="27922">MILFNNVNKVWPNGKQVLKNITLEINKGELVAVIGLSGAGKTTLLKTINKINDISSGEIIIDFDKTKDHYEITKTRGKKLQKLRQKIGLMSQEYNNIANKTVLQNVLNARVSSQKGINKIIGFFKREDKLIALNSLNKLNLLDYAYIRADNLSGGQQQRVALARTLAQQPFLIIADEPVSALDPILANQVMKDFKNINKKDGITVIINIHHVDLAKKYATRVIGLNNGEIVFDDVPSKLDAQAMKKIYGE</sequence>